<feature type="chain" id="PRO_0000212335" description="Protein arginine N-methyltransferase 7">
    <location>
        <begin position="1"/>
        <end position="692"/>
    </location>
</feature>
<feature type="domain" description="SAM-dependent MTase PRMT-type 1" evidence="3">
    <location>
        <begin position="14"/>
        <end position="345"/>
    </location>
</feature>
<feature type="domain" description="SAM-dependent MTase PRMT-type 2" evidence="3">
    <location>
        <begin position="358"/>
        <end position="684"/>
    </location>
</feature>
<feature type="active site" evidence="1">
    <location>
        <position position="144"/>
    </location>
</feature>
<feature type="active site" evidence="1">
    <location>
        <position position="153"/>
    </location>
</feature>
<feature type="modified residue" description="Omega-N-methylarginine" evidence="2">
    <location>
        <position position="32"/>
    </location>
</feature>
<feature type="splice variant" id="VSP_037253" description="In isoform 3." evidence="11">
    <location>
        <begin position="45"/>
        <end position="94"/>
    </location>
</feature>
<feature type="splice variant" id="VSP_005213" description="In isoform 2." evidence="10">
    <location>
        <begin position="95"/>
        <end position="168"/>
    </location>
</feature>
<feature type="splice variant" id="VSP_005214" description="In isoform 2." evidence="10">
    <location>
        <begin position="399"/>
        <end position="472"/>
    </location>
</feature>
<feature type="splice variant" id="VSP_037254" description="In isoform 4." evidence="11">
    <original>DLWRIRSPCGDCEGFDVHIMDDMIKRALDFRESREAEPHPLW</original>
    <variation>VCREQQDVPLVLAATLPCVLAGGCGWGCSFLTGPVADPEPLW</variation>
    <location>
        <begin position="526"/>
        <end position="567"/>
    </location>
</feature>
<feature type="splice variant" id="VSP_037255" description="In isoform 4." evidence="11">
    <location>
        <begin position="568"/>
        <end position="692"/>
    </location>
</feature>
<feature type="sequence variant" id="VAR_076329" description="In SBIDDS; dbSNP:rs149170494." evidence="9">
    <original>R</original>
    <variation>T</variation>
    <location>
        <position position="32"/>
    </location>
</feature>
<feature type="sequence variant" id="VAR_076330" description="In SBIDDS; dbSNP:rs762515973." evidence="9">
    <original>R</original>
    <variation>G</variation>
    <location>
        <position position="387"/>
    </location>
</feature>
<feature type="sequence variant" id="VAR_076331" description="In SBIDDS; dbSNP:rs751670999." evidence="9">
    <original>W</original>
    <variation>R</variation>
    <location>
        <position position="494"/>
    </location>
</feature>
<feature type="sequence conflict" description="In Ref. 1; BAG53431." evidence="12" ref="1">
    <original>S</original>
    <variation>G</variation>
    <location>
        <position position="218"/>
    </location>
</feature>
<feature type="sequence conflict" description="In Ref. 1; BAG53431." evidence="12" ref="1">
    <original>P</original>
    <variation>L</variation>
    <location>
        <position position="246"/>
    </location>
</feature>
<feature type="sequence conflict" description="In Ref. 1; BAG51772." evidence="12" ref="1">
    <original>S</original>
    <variation>G</variation>
    <location>
        <position position="258"/>
    </location>
</feature>
<feature type="sequence conflict" description="In Ref. 1; BAB14215." evidence="12" ref="1">
    <original>A</original>
    <variation>S</variation>
    <location>
        <position position="633"/>
    </location>
</feature>
<name>ANM7_HUMAN</name>
<accession>Q9NVM4</accession>
<accession>B3KPR0</accession>
<accession>B3KUG9</accession>
<accession>B4E379</accession>
<accession>Q96PV5</accession>
<accession>Q9H9L0</accession>
<keyword id="KW-0025">Alternative splicing</keyword>
<keyword id="KW-0156">Chromatin regulator</keyword>
<keyword id="KW-0963">Cytoplasm</keyword>
<keyword id="KW-0221">Differentiation</keyword>
<keyword id="KW-0225">Disease variant</keyword>
<keyword id="KW-0242">Dwarfism</keyword>
<keyword id="KW-0991">Intellectual disability</keyword>
<keyword id="KW-0488">Methylation</keyword>
<keyword id="KW-0489">Methyltransferase</keyword>
<keyword id="KW-0539">Nucleus</keyword>
<keyword id="KW-1267">Proteomics identification</keyword>
<keyword id="KW-1185">Reference proteome</keyword>
<keyword id="KW-0677">Repeat</keyword>
<keyword id="KW-0949">S-adenosyl-L-methionine</keyword>
<keyword id="KW-0804">Transcription</keyword>
<keyword id="KW-0805">Transcription regulation</keyword>
<keyword id="KW-0808">Transferase</keyword>
<sequence length="692" mass="78459">MKIFCSRANPTTGSVEWLEEDEHYDYHQEIARSSYADMLHDKDRNVKYYQGIRAAVSRVKDRGQKALVLDIGTGTGLLSMMAVTAGADFCYAIEVFKPMADAAVKIVEKNGFSDKIKVINKHSTEVTVGPEGDMPCRANILVTELFDTELIGEGALPSYEHAHRHLVEENCEAVPHRATVYAQLVESGRMWSWNKLFPIHVQTSLGEQVIVPPVDVESCPGAPSVCDIQLNQVSPADFTVLSDVLPMFSIDFSKQVSSSAACHSRRFEPLTSGRAQVVLSWWDIEMDPEGKIKCTMAPFWAHSDPEEMQWRDHWMQCVYFLPQEEPVVQGSALYLVAHHDDYCVWYSLQRTSPEKNERVRQMRPVCDCQAHLLWNRPRFGEINDQDRTDRYVQALRTVLKPDSVCLCVSDGSLLSVLAHHLGVEQVFTVESSAASHKLLRKIFKANHLEDKINIIEKRPELLTNEDLQGRKVSLLLGEPFFTTSLLPWHNLYFWYVRTAVDQHLGPGAMVMPQAASLHAVVVEFRDLWRIRSPCGDCEGFDVHIMDDMIKRALDFRESREAEPHPLWEYPCRSLSEPWQILTFDFQQPVPLQPLCAEGTVELRRPGQSHAAVLWMEYHLTPECTLSTGLLEPADPEGGCCWNPHCKQAVYFFSPAPDPRALLGGPRTVSYAVEFHPDTGDIIMEFRHADTPD</sequence>
<gene>
    <name type="primary">PRMT7</name>
    <name type="synonym">KIAA1933</name>
</gene>
<evidence type="ECO:0000250" key="1"/>
<evidence type="ECO:0000250" key="2">
    <source>
        <dbReference type="UniProtKB" id="Q922X9"/>
    </source>
</evidence>
<evidence type="ECO:0000255" key="3">
    <source>
        <dbReference type="PROSITE-ProRule" id="PRU01015"/>
    </source>
</evidence>
<evidence type="ECO:0000269" key="4">
    <source>
    </source>
</evidence>
<evidence type="ECO:0000269" key="5">
    <source>
    </source>
</evidence>
<evidence type="ECO:0000269" key="6">
    <source>
    </source>
</evidence>
<evidence type="ECO:0000269" key="7">
    <source>
    </source>
</evidence>
<evidence type="ECO:0000269" key="8">
    <source>
    </source>
</evidence>
<evidence type="ECO:0000269" key="9">
    <source>
    </source>
</evidence>
<evidence type="ECO:0000303" key="10">
    <source>
    </source>
</evidence>
<evidence type="ECO:0000303" key="11">
    <source>
    </source>
</evidence>
<evidence type="ECO:0000305" key="12"/>
<comment type="function">
    <text evidence="4 5 6 7">Arginine methyltransferase that can both catalyze the formation of omega-N monomethylarginine (MMA) and symmetrical dimethylarginine (sDMA), with a preference for the formation of MMA. Specifically mediates the symmetrical dimethylation of arginine residues in the small nuclear ribonucleoproteins Sm D1 (SNRPD1) and Sm D3 (SNRPD3); such methylation being required for the assembly and biogenesis of snRNP core particles. Specifically mediates the symmetric dimethylation of histone H4 'Arg-3' to form H4R3me2s. Plays a role in gene imprinting by being recruited by CTCFL at the H19 imprinted control region (ICR) and methylating histone H4 to form H4R3me2s, possibly leading to recruit DNA methyltransferases at these sites. May also play a role in embryonic stem cell (ESC) pluripotency. Also able to mediate the arginine methylation of histone H2A and myelin basic protein (MBP) in vitro; the relevance of such results is however unclear in vivo.</text>
</comment>
<comment type="catalytic activity">
    <reaction evidence="8">
        <text>L-arginyl-[protein] + S-adenosyl-L-methionine = N(omega)-methyl-L-arginyl-[protein] + S-adenosyl-L-homocysteine + H(+)</text>
        <dbReference type="Rhea" id="RHEA:48100"/>
        <dbReference type="Rhea" id="RHEA-COMP:10532"/>
        <dbReference type="Rhea" id="RHEA-COMP:11990"/>
        <dbReference type="ChEBI" id="CHEBI:15378"/>
        <dbReference type="ChEBI" id="CHEBI:29965"/>
        <dbReference type="ChEBI" id="CHEBI:57856"/>
        <dbReference type="ChEBI" id="CHEBI:59789"/>
        <dbReference type="ChEBI" id="CHEBI:65280"/>
        <dbReference type="EC" id="2.1.1.321"/>
    </reaction>
</comment>
<comment type="subunit">
    <text evidence="1 6">Homodimer and heterodimer (By similarity). Interacts with CTCFL (By similarity). Interacts with PRMT5 and SNRPD3.</text>
</comment>
<comment type="interaction">
    <interactant intactId="EBI-3215577">
        <id>Q9NVM4</id>
    </interactant>
    <interactant intactId="EBI-536842">
        <id>P00966</id>
        <label>ASS1</label>
    </interactant>
    <organismsDiffer>false</organismsDiffer>
    <experiments>9</experiments>
</comment>
<comment type="interaction">
    <interactant intactId="EBI-3215577">
        <id>Q9NVM4</id>
    </interactant>
    <interactant intactId="EBI-1056162">
        <id>P05198</id>
        <label>EIF2S1</label>
    </interactant>
    <organismsDiffer>false</organismsDiffer>
    <experiments>7</experiments>
</comment>
<comment type="interaction">
    <interactant intactId="EBI-3215577">
        <id>Q9NVM4</id>
    </interactant>
    <interactant intactId="EBI-10271199">
        <id>Q8NI38</id>
        <label>NFKBID</label>
    </interactant>
    <organismsDiffer>false</organismsDiffer>
    <experiments>3</experiments>
</comment>
<comment type="interaction">
    <interactant intactId="EBI-3215577">
        <id>Q9NVM4</id>
    </interactant>
    <interactant intactId="EBI-11962468">
        <id>Q7Z4V0</id>
        <label>ZNF438</label>
    </interactant>
    <organismsDiffer>false</organismsDiffer>
    <experiments>3</experiments>
</comment>
<comment type="subcellular location">
    <subcellularLocation>
        <location evidence="5">Cytoplasm</location>
        <location evidence="5">Cytosol</location>
    </subcellularLocation>
    <subcellularLocation>
        <location evidence="5">Nucleus</location>
    </subcellularLocation>
</comment>
<comment type="alternative products">
    <event type="alternative splicing"/>
    <isoform>
        <id>Q9NVM4-1</id>
        <name>1</name>
        <sequence type="displayed"/>
    </isoform>
    <isoform>
        <id>Q9NVM4-2</id>
        <name>2</name>
        <sequence type="described" ref="VSP_005213 VSP_005214"/>
    </isoform>
    <isoform>
        <id>Q9NVM4-3</id>
        <name>3</name>
        <sequence type="described" ref="VSP_037253"/>
    </isoform>
    <isoform>
        <id>Q9NVM4-4</id>
        <name>4</name>
        <sequence type="described" ref="VSP_037254 VSP_037255"/>
    </isoform>
</comment>
<comment type="disease" evidence="9">
    <disease id="DI-04865">
        <name>Short stature, brachydactyly, impaired intellectual developmental, and seizures</name>
        <acronym>SBIDDS</acronym>
        <description>An autosomal recessive disease characterized by developmental delay, learning disabilities, mild intellectual disability, delayed speech, and skeletal abnormalities. Skeletal features include short stature, brachydactyly, and short metacarpals and metatarsals.</description>
        <dbReference type="MIM" id="617157"/>
    </disease>
    <text>The disease is caused by variants affecting the gene represented in this entry.</text>
</comment>
<comment type="miscellaneous">
    <text>May be involved in etoposide-induced cytotoxicity, a chemotherapeutic agent frequently used for testicular cancer and small-cell lung cancer that can cause cytotoxicity in the treatment of other cancers. Down-regulation confers increased sensitivity to the Top1 inhibitor camptothecin (CPT).</text>
</comment>
<comment type="similarity">
    <text evidence="3">Belongs to the class I-like SAM-binding methyltransferase superfamily. Protein arginine N-methyltransferase family. PRMT7 subfamily.</text>
</comment>
<comment type="sequence caution" evidence="12">
    <conflict type="erroneous initiation">
        <sequence resource="EMBL-CDS" id="BAB14215"/>
    </conflict>
    <text>Truncated N-terminus.</text>
</comment>
<proteinExistence type="evidence at protein level"/>
<dbReference type="EC" id="2.1.1.321" evidence="8"/>
<dbReference type="EMBL" id="AK001502">
    <property type="protein sequence ID" value="BAA91726.1"/>
    <property type="molecule type" value="mRNA"/>
</dbReference>
<dbReference type="EMBL" id="AK022739">
    <property type="protein sequence ID" value="BAB14215.1"/>
    <property type="status" value="ALT_INIT"/>
    <property type="molecule type" value="mRNA"/>
</dbReference>
<dbReference type="EMBL" id="AK056647">
    <property type="protein sequence ID" value="BAG51772.1"/>
    <property type="molecule type" value="mRNA"/>
</dbReference>
<dbReference type="EMBL" id="AK097175">
    <property type="protein sequence ID" value="BAG53431.1"/>
    <property type="molecule type" value="mRNA"/>
</dbReference>
<dbReference type="EMBL" id="AK304605">
    <property type="protein sequence ID" value="BAG65391.1"/>
    <property type="molecule type" value="mRNA"/>
</dbReference>
<dbReference type="EMBL" id="BC000146">
    <property type="protein sequence ID" value="AAH00146.1"/>
    <property type="molecule type" value="mRNA"/>
</dbReference>
<dbReference type="EMBL" id="AB067520">
    <property type="protein sequence ID" value="BAB67826.1"/>
    <property type="molecule type" value="mRNA"/>
</dbReference>
<dbReference type="CCDS" id="CCDS10866.1">
    <molecule id="Q9NVM4-1"/>
</dbReference>
<dbReference type="CCDS" id="CCDS54033.1">
    <molecule id="Q9NVM4-3"/>
</dbReference>
<dbReference type="RefSeq" id="NP_001171753.1">
    <molecule id="Q9NVM4-3"/>
    <property type="nucleotide sequence ID" value="NM_001184824.4"/>
</dbReference>
<dbReference type="RefSeq" id="NP_001276947.1">
    <molecule id="Q9NVM4-1"/>
    <property type="nucleotide sequence ID" value="NM_001290018.2"/>
</dbReference>
<dbReference type="RefSeq" id="NP_001364947.1">
    <molecule id="Q9NVM4-1"/>
    <property type="nucleotide sequence ID" value="NM_001378018.1"/>
</dbReference>
<dbReference type="RefSeq" id="NP_061896.1">
    <molecule id="Q9NVM4-1"/>
    <property type="nucleotide sequence ID" value="NM_019023.5"/>
</dbReference>
<dbReference type="RefSeq" id="XP_016878783.1">
    <property type="nucleotide sequence ID" value="XM_017023294.1"/>
</dbReference>
<dbReference type="RefSeq" id="XP_016878784.1">
    <property type="nucleotide sequence ID" value="XM_017023295.1"/>
</dbReference>
<dbReference type="RefSeq" id="XP_054236459.1">
    <molecule id="Q9NVM4-1"/>
    <property type="nucleotide sequence ID" value="XM_054380484.1"/>
</dbReference>
<dbReference type="RefSeq" id="XP_054236478.1">
    <molecule id="Q9NVM4-4"/>
    <property type="nucleotide sequence ID" value="XM_054380503.1"/>
</dbReference>
<dbReference type="RefSeq" id="XP_054236479.1">
    <molecule id="Q9NVM4-4"/>
    <property type="nucleotide sequence ID" value="XM_054380504.1"/>
</dbReference>
<dbReference type="RefSeq" id="XP_054236480.1">
    <molecule id="Q9NVM4-4"/>
    <property type="nucleotide sequence ID" value="XM_054380505.1"/>
</dbReference>
<dbReference type="SMR" id="Q9NVM4"/>
<dbReference type="BioGRID" id="119992">
    <property type="interactions" value="53"/>
</dbReference>
<dbReference type="CORUM" id="Q9NVM4"/>
<dbReference type="FunCoup" id="Q9NVM4">
    <property type="interactions" value="4766"/>
</dbReference>
<dbReference type="IntAct" id="Q9NVM4">
    <property type="interactions" value="28"/>
</dbReference>
<dbReference type="MINT" id="Q9NVM4"/>
<dbReference type="STRING" id="9606.ENSP00000343103"/>
<dbReference type="BindingDB" id="Q9NVM4"/>
<dbReference type="ChEMBL" id="CHEMBL3562175"/>
<dbReference type="GuidetoPHARMACOLOGY" id="1258"/>
<dbReference type="GlyGen" id="Q9NVM4">
    <property type="glycosylation" value="2 sites, 1 O-linked glycan (1 site)"/>
</dbReference>
<dbReference type="iPTMnet" id="Q9NVM4"/>
<dbReference type="PhosphoSitePlus" id="Q9NVM4"/>
<dbReference type="BioMuta" id="PRMT7"/>
<dbReference type="DMDM" id="20137529"/>
<dbReference type="jPOST" id="Q9NVM4"/>
<dbReference type="MassIVE" id="Q9NVM4"/>
<dbReference type="PaxDb" id="9606-ENSP00000343103"/>
<dbReference type="PeptideAtlas" id="Q9NVM4"/>
<dbReference type="ProteomicsDB" id="82826">
    <molecule id="Q9NVM4-1"/>
</dbReference>
<dbReference type="ProteomicsDB" id="82827">
    <molecule id="Q9NVM4-2"/>
</dbReference>
<dbReference type="ProteomicsDB" id="82828">
    <molecule id="Q9NVM4-3"/>
</dbReference>
<dbReference type="ProteomicsDB" id="82829">
    <molecule id="Q9NVM4-4"/>
</dbReference>
<dbReference type="Pumba" id="Q9NVM4"/>
<dbReference type="Antibodypedia" id="29775">
    <property type="antibodies" value="269 antibodies from 32 providers"/>
</dbReference>
<dbReference type="DNASU" id="54496"/>
<dbReference type="Ensembl" id="ENST00000339507.9">
    <molecule id="Q9NVM4-1"/>
    <property type="protein sequence ID" value="ENSP00000343103.5"/>
    <property type="gene ID" value="ENSG00000132600.18"/>
</dbReference>
<dbReference type="Ensembl" id="ENST00000441236.3">
    <molecule id="Q9NVM4-1"/>
    <property type="protein sequence ID" value="ENSP00000409324.2"/>
    <property type="gene ID" value="ENSG00000132600.18"/>
</dbReference>
<dbReference type="Ensembl" id="ENST00000449359.7">
    <molecule id="Q9NVM4-3"/>
    <property type="protein sequence ID" value="ENSP00000414716.3"/>
    <property type="gene ID" value="ENSG00000132600.18"/>
</dbReference>
<dbReference type="Ensembl" id="ENST00000687558.1">
    <molecule id="Q9NVM4-1"/>
    <property type="protein sequence ID" value="ENSP00000509003.1"/>
    <property type="gene ID" value="ENSG00000132600.18"/>
</dbReference>
<dbReference type="Ensembl" id="ENST00000692760.1">
    <molecule id="Q9NVM4-1"/>
    <property type="protein sequence ID" value="ENSP00000510748.1"/>
    <property type="gene ID" value="ENSG00000132600.18"/>
</dbReference>
<dbReference type="GeneID" id="54496"/>
<dbReference type="KEGG" id="hsa:54496"/>
<dbReference type="MANE-Select" id="ENST00000441236.3">
    <property type="protein sequence ID" value="ENSP00000409324.2"/>
    <property type="RefSeq nucleotide sequence ID" value="NM_019023.5"/>
    <property type="RefSeq protein sequence ID" value="NP_061896.1"/>
</dbReference>
<dbReference type="UCSC" id="uc010vlg.3">
    <molecule id="Q9NVM4-1"/>
    <property type="organism name" value="human"/>
</dbReference>
<dbReference type="AGR" id="HGNC:25557"/>
<dbReference type="CTD" id="54496"/>
<dbReference type="DisGeNET" id="54496"/>
<dbReference type="GeneCards" id="PRMT7"/>
<dbReference type="HGNC" id="HGNC:25557">
    <property type="gene designation" value="PRMT7"/>
</dbReference>
<dbReference type="HPA" id="ENSG00000132600">
    <property type="expression patterns" value="Low tissue specificity"/>
</dbReference>
<dbReference type="MalaCards" id="PRMT7"/>
<dbReference type="MIM" id="610087">
    <property type="type" value="gene"/>
</dbReference>
<dbReference type="MIM" id="617157">
    <property type="type" value="phenotype"/>
</dbReference>
<dbReference type="neXtProt" id="NX_Q9NVM4"/>
<dbReference type="OpenTargets" id="ENSG00000132600"/>
<dbReference type="Orphanet" id="464288">
    <property type="disease" value="Short stature-brachydactyly-obesity-global developmental delay syndrome"/>
</dbReference>
<dbReference type="PharmGKB" id="PA143485581"/>
<dbReference type="VEuPathDB" id="HostDB:ENSG00000132600"/>
<dbReference type="eggNOG" id="KOG1501">
    <property type="taxonomic scope" value="Eukaryota"/>
</dbReference>
<dbReference type="GeneTree" id="ENSGT00940000156879"/>
<dbReference type="HOGENOM" id="CLU_015180_0_0_1"/>
<dbReference type="InParanoid" id="Q9NVM4"/>
<dbReference type="OMA" id="CHHDEYS"/>
<dbReference type="OrthoDB" id="412876at2759"/>
<dbReference type="PAN-GO" id="Q9NVM4">
    <property type="GO annotations" value="1 GO annotation based on evolutionary models"/>
</dbReference>
<dbReference type="PhylomeDB" id="Q9NVM4"/>
<dbReference type="TreeFam" id="TF315221"/>
<dbReference type="BioCyc" id="MetaCyc:HS05660-MONOMER"/>
<dbReference type="BRENDA" id="2.1.1.321">
    <property type="organism ID" value="2681"/>
</dbReference>
<dbReference type="PathwayCommons" id="Q9NVM4"/>
<dbReference type="Reactome" id="R-HSA-3214858">
    <property type="pathway name" value="RMTs methylate histone arginines"/>
</dbReference>
<dbReference type="SignaLink" id="Q9NVM4"/>
<dbReference type="BioGRID-ORCS" id="54496">
    <property type="hits" value="56 hits in 1178 CRISPR screens"/>
</dbReference>
<dbReference type="CD-CODE" id="91857CE7">
    <property type="entry name" value="Nucleolus"/>
</dbReference>
<dbReference type="ChiTaRS" id="PRMT7">
    <property type="organism name" value="human"/>
</dbReference>
<dbReference type="GenomeRNAi" id="54496"/>
<dbReference type="Pharos" id="Q9NVM4">
    <property type="development level" value="Tchem"/>
</dbReference>
<dbReference type="PRO" id="PR:Q9NVM4"/>
<dbReference type="Proteomes" id="UP000005640">
    <property type="component" value="Chromosome 16"/>
</dbReference>
<dbReference type="RNAct" id="Q9NVM4">
    <property type="molecule type" value="protein"/>
</dbReference>
<dbReference type="Bgee" id="ENSG00000132600">
    <property type="expression patterns" value="Expressed in right hemisphere of cerebellum and 112 other cell types or tissues"/>
</dbReference>
<dbReference type="ExpressionAtlas" id="Q9NVM4">
    <property type="expression patterns" value="baseline and differential"/>
</dbReference>
<dbReference type="GO" id="GO:0005829">
    <property type="term" value="C:cytosol"/>
    <property type="evidence" value="ECO:0000314"/>
    <property type="project" value="UniProtKB"/>
</dbReference>
<dbReference type="GO" id="GO:0001650">
    <property type="term" value="C:fibrillar center"/>
    <property type="evidence" value="ECO:0000314"/>
    <property type="project" value="HPA"/>
</dbReference>
<dbReference type="GO" id="GO:0005654">
    <property type="term" value="C:nucleoplasm"/>
    <property type="evidence" value="ECO:0000314"/>
    <property type="project" value="HPA"/>
</dbReference>
<dbReference type="GO" id="GO:0005634">
    <property type="term" value="C:nucleus"/>
    <property type="evidence" value="ECO:0000314"/>
    <property type="project" value="UniProtKB"/>
</dbReference>
<dbReference type="GO" id="GO:0042393">
    <property type="term" value="F:histone binding"/>
    <property type="evidence" value="ECO:0000314"/>
    <property type="project" value="HGNC-UCL"/>
</dbReference>
<dbReference type="GO" id="GO:0140939">
    <property type="term" value="F:histone H4 methyltransferase activity"/>
    <property type="evidence" value="ECO:0000314"/>
    <property type="project" value="HGNC-UCL"/>
</dbReference>
<dbReference type="GO" id="GO:0044020">
    <property type="term" value="F:histone H4R3 methyltransferase activity"/>
    <property type="evidence" value="ECO:0000250"/>
    <property type="project" value="UniProtKB"/>
</dbReference>
<dbReference type="GO" id="GO:0042054">
    <property type="term" value="F:histone methyltransferase activity"/>
    <property type="evidence" value="ECO:0000318"/>
    <property type="project" value="GO_Central"/>
</dbReference>
<dbReference type="GO" id="GO:0016274">
    <property type="term" value="F:protein-arginine N-methyltransferase activity"/>
    <property type="evidence" value="ECO:0000318"/>
    <property type="project" value="GO_Central"/>
</dbReference>
<dbReference type="GO" id="GO:0035241">
    <property type="term" value="F:protein-arginine omega-N monomethyltransferase activity"/>
    <property type="evidence" value="ECO:0000314"/>
    <property type="project" value="UniProtKB"/>
</dbReference>
<dbReference type="GO" id="GO:0035243">
    <property type="term" value="F:protein-arginine omega-N symmetric methyltransferase activity"/>
    <property type="evidence" value="ECO:0000314"/>
    <property type="project" value="UniProtKB"/>
</dbReference>
<dbReference type="GO" id="GO:0043021">
    <property type="term" value="F:ribonucleoprotein complex binding"/>
    <property type="evidence" value="ECO:0000353"/>
    <property type="project" value="UniProtKB"/>
</dbReference>
<dbReference type="GO" id="GO:0008757">
    <property type="term" value="F:S-adenosylmethionine-dependent methyltransferase activity"/>
    <property type="evidence" value="ECO:0000314"/>
    <property type="project" value="HGNC-UCL"/>
</dbReference>
<dbReference type="GO" id="GO:0006338">
    <property type="term" value="P:chromatin remodeling"/>
    <property type="evidence" value="ECO:0000318"/>
    <property type="project" value="GO_Central"/>
</dbReference>
<dbReference type="GO" id="GO:0071514">
    <property type="term" value="P:genomic imprinting"/>
    <property type="evidence" value="ECO:0000250"/>
    <property type="project" value="UniProtKB"/>
</dbReference>
<dbReference type="GO" id="GO:0018216">
    <property type="term" value="P:peptidyl-arginine methylation"/>
    <property type="evidence" value="ECO:0000315"/>
    <property type="project" value="UniProtKB"/>
</dbReference>
<dbReference type="GO" id="GO:0006355">
    <property type="term" value="P:regulation of DNA-templated transcription"/>
    <property type="evidence" value="ECO:0000318"/>
    <property type="project" value="GO_Central"/>
</dbReference>
<dbReference type="GO" id="GO:0000387">
    <property type="term" value="P:spliceosomal snRNP assembly"/>
    <property type="evidence" value="ECO:0000315"/>
    <property type="project" value="UniProtKB"/>
</dbReference>
<dbReference type="CDD" id="cd02440">
    <property type="entry name" value="AdoMet_MTases"/>
    <property type="match status" value="1"/>
</dbReference>
<dbReference type="FunFam" id="2.70.160.11:FF:000010">
    <property type="entry name" value="Protein arginine N-methyltransferase"/>
    <property type="match status" value="1"/>
</dbReference>
<dbReference type="FunFam" id="2.70.160.11:FF:000004">
    <property type="entry name" value="Protein arginine N-methyltransferase 7"/>
    <property type="match status" value="1"/>
</dbReference>
<dbReference type="FunFam" id="3.40.50.150:FF:000070">
    <property type="entry name" value="Protein arginine N-methyltransferase 7"/>
    <property type="match status" value="1"/>
</dbReference>
<dbReference type="FunFam" id="3.40.50.150:FF:000071">
    <property type="entry name" value="Protein arginine N-methyltransferase 7"/>
    <property type="match status" value="1"/>
</dbReference>
<dbReference type="Gene3D" id="2.70.160.11">
    <property type="entry name" value="Hnrnp arginine n-methyltransferase1"/>
    <property type="match status" value="2"/>
</dbReference>
<dbReference type="Gene3D" id="3.40.50.150">
    <property type="entry name" value="Vaccinia Virus protein VP39"/>
    <property type="match status" value="2"/>
</dbReference>
<dbReference type="InterPro" id="IPR025799">
    <property type="entry name" value="Arg_MeTrfase"/>
</dbReference>
<dbReference type="InterPro" id="IPR014644">
    <property type="entry name" value="MeTrfase_PRMT7"/>
</dbReference>
<dbReference type="InterPro" id="IPR055135">
    <property type="entry name" value="PRMT_dom"/>
</dbReference>
<dbReference type="InterPro" id="IPR029063">
    <property type="entry name" value="SAM-dependent_MTases_sf"/>
</dbReference>
<dbReference type="PANTHER" id="PTHR11006">
    <property type="entry name" value="PROTEIN ARGININE N-METHYLTRANSFERASE"/>
    <property type="match status" value="1"/>
</dbReference>
<dbReference type="PANTHER" id="PTHR11006:SF4">
    <property type="entry name" value="PROTEIN ARGININE N-METHYLTRANSFERASE 7"/>
    <property type="match status" value="1"/>
</dbReference>
<dbReference type="Pfam" id="PF06325">
    <property type="entry name" value="PrmA"/>
    <property type="match status" value="1"/>
</dbReference>
<dbReference type="Pfam" id="PF22528">
    <property type="entry name" value="PRMT_C"/>
    <property type="match status" value="2"/>
</dbReference>
<dbReference type="PIRSF" id="PIRSF036946">
    <property type="entry name" value="Arg_N-mtase"/>
    <property type="match status" value="1"/>
</dbReference>
<dbReference type="SUPFAM" id="SSF53335">
    <property type="entry name" value="S-adenosyl-L-methionine-dependent methyltransferases"/>
    <property type="match status" value="2"/>
</dbReference>
<dbReference type="PROSITE" id="PS51678">
    <property type="entry name" value="SAM_MT_PRMT"/>
    <property type="match status" value="2"/>
</dbReference>
<reference key="1">
    <citation type="journal article" date="2004" name="Nat. Genet.">
        <title>Complete sequencing and characterization of 21,243 full-length human cDNAs.</title>
        <authorList>
            <person name="Ota T."/>
            <person name="Suzuki Y."/>
            <person name="Nishikawa T."/>
            <person name="Otsuki T."/>
            <person name="Sugiyama T."/>
            <person name="Irie R."/>
            <person name="Wakamatsu A."/>
            <person name="Hayashi K."/>
            <person name="Sato H."/>
            <person name="Nagai K."/>
            <person name="Kimura K."/>
            <person name="Makita H."/>
            <person name="Sekine M."/>
            <person name="Obayashi M."/>
            <person name="Nishi T."/>
            <person name="Shibahara T."/>
            <person name="Tanaka T."/>
            <person name="Ishii S."/>
            <person name="Yamamoto J."/>
            <person name="Saito K."/>
            <person name="Kawai Y."/>
            <person name="Isono Y."/>
            <person name="Nakamura Y."/>
            <person name="Nagahari K."/>
            <person name="Murakami K."/>
            <person name="Yasuda T."/>
            <person name="Iwayanagi T."/>
            <person name="Wagatsuma M."/>
            <person name="Shiratori A."/>
            <person name="Sudo H."/>
            <person name="Hosoiri T."/>
            <person name="Kaku Y."/>
            <person name="Kodaira H."/>
            <person name="Kondo H."/>
            <person name="Sugawara M."/>
            <person name="Takahashi M."/>
            <person name="Kanda K."/>
            <person name="Yokoi T."/>
            <person name="Furuya T."/>
            <person name="Kikkawa E."/>
            <person name="Omura Y."/>
            <person name="Abe K."/>
            <person name="Kamihara K."/>
            <person name="Katsuta N."/>
            <person name="Sato K."/>
            <person name="Tanikawa M."/>
            <person name="Yamazaki M."/>
            <person name="Ninomiya K."/>
            <person name="Ishibashi T."/>
            <person name="Yamashita H."/>
            <person name="Murakawa K."/>
            <person name="Fujimori K."/>
            <person name="Tanai H."/>
            <person name="Kimata M."/>
            <person name="Watanabe M."/>
            <person name="Hiraoka S."/>
            <person name="Chiba Y."/>
            <person name="Ishida S."/>
            <person name="Ono Y."/>
            <person name="Takiguchi S."/>
            <person name="Watanabe S."/>
            <person name="Yosida M."/>
            <person name="Hotuta T."/>
            <person name="Kusano J."/>
            <person name="Kanehori K."/>
            <person name="Takahashi-Fujii A."/>
            <person name="Hara H."/>
            <person name="Tanase T.-O."/>
            <person name="Nomura Y."/>
            <person name="Togiya S."/>
            <person name="Komai F."/>
            <person name="Hara R."/>
            <person name="Takeuchi K."/>
            <person name="Arita M."/>
            <person name="Imose N."/>
            <person name="Musashino K."/>
            <person name="Yuuki H."/>
            <person name="Oshima A."/>
            <person name="Sasaki N."/>
            <person name="Aotsuka S."/>
            <person name="Yoshikawa Y."/>
            <person name="Matsunawa H."/>
            <person name="Ichihara T."/>
            <person name="Shiohata N."/>
            <person name="Sano S."/>
            <person name="Moriya S."/>
            <person name="Momiyama H."/>
            <person name="Satoh N."/>
            <person name="Takami S."/>
            <person name="Terashima Y."/>
            <person name="Suzuki O."/>
            <person name="Nakagawa S."/>
            <person name="Senoh A."/>
            <person name="Mizoguchi H."/>
            <person name="Goto Y."/>
            <person name="Shimizu F."/>
            <person name="Wakebe H."/>
            <person name="Hishigaki H."/>
            <person name="Watanabe T."/>
            <person name="Sugiyama A."/>
            <person name="Takemoto M."/>
            <person name="Kawakami B."/>
            <person name="Yamazaki M."/>
            <person name="Watanabe K."/>
            <person name="Kumagai A."/>
            <person name="Itakura S."/>
            <person name="Fukuzumi Y."/>
            <person name="Fujimori Y."/>
            <person name="Komiyama M."/>
            <person name="Tashiro H."/>
            <person name="Tanigami A."/>
            <person name="Fujiwara T."/>
            <person name="Ono T."/>
            <person name="Yamada K."/>
            <person name="Fujii Y."/>
            <person name="Ozaki K."/>
            <person name="Hirao M."/>
            <person name="Ohmori Y."/>
            <person name="Kawabata A."/>
            <person name="Hikiji T."/>
            <person name="Kobatake N."/>
            <person name="Inagaki H."/>
            <person name="Ikema Y."/>
            <person name="Okamoto S."/>
            <person name="Okitani R."/>
            <person name="Kawakami T."/>
            <person name="Noguchi S."/>
            <person name="Itoh T."/>
            <person name="Shigeta K."/>
            <person name="Senba T."/>
            <person name="Matsumura K."/>
            <person name="Nakajima Y."/>
            <person name="Mizuno T."/>
            <person name="Morinaga M."/>
            <person name="Sasaki M."/>
            <person name="Togashi T."/>
            <person name="Oyama M."/>
            <person name="Hata H."/>
            <person name="Watanabe M."/>
            <person name="Komatsu T."/>
            <person name="Mizushima-Sugano J."/>
            <person name="Satoh T."/>
            <person name="Shirai Y."/>
            <person name="Takahashi Y."/>
            <person name="Nakagawa K."/>
            <person name="Okumura K."/>
            <person name="Nagase T."/>
            <person name="Nomura N."/>
            <person name="Kikuchi H."/>
            <person name="Masuho Y."/>
            <person name="Yamashita R."/>
            <person name="Nakai K."/>
            <person name="Yada T."/>
            <person name="Nakamura Y."/>
            <person name="Ohara O."/>
            <person name="Isogai T."/>
            <person name="Sugano S."/>
        </authorList>
    </citation>
    <scope>NUCLEOTIDE SEQUENCE [LARGE SCALE MRNA] (ISOFORMS 1; 3 AND 4)</scope>
    <source>
        <tissue>Brain</tissue>
        <tissue>Spleen</tissue>
        <tissue>Uterus</tissue>
    </source>
</reference>
<reference key="2">
    <citation type="journal article" date="2004" name="Genome Res.">
        <title>The status, quality, and expansion of the NIH full-length cDNA project: the Mammalian Gene Collection (MGC).</title>
        <authorList>
            <consortium name="The MGC Project Team"/>
        </authorList>
    </citation>
    <scope>NUCLEOTIDE SEQUENCE [LARGE SCALE MRNA] (ISOFORM 1)</scope>
    <source>
        <tissue>Placenta</tissue>
    </source>
</reference>
<reference key="3">
    <citation type="journal article" date="2001" name="DNA Res.">
        <title>Prediction of the coding sequences of unidentified human genes. XXI. The complete sequences of 60 new cDNA clones from brain which code for large proteins.</title>
        <authorList>
            <person name="Nagase T."/>
            <person name="Kikuno R."/>
            <person name="Ohara O."/>
        </authorList>
    </citation>
    <scope>NUCLEOTIDE SEQUENCE [LARGE SCALE MRNA] OF 45-692 (ISOFORM 2)</scope>
    <source>
        <tissue>Brain</tissue>
    </source>
</reference>
<reference key="4">
    <citation type="journal article" date="2004" name="J. Biol. Chem.">
        <title>PRMT7 is a member of the protein arginine methyltransferase family with a distinct substrate specificity.</title>
        <authorList>
            <person name="Miranda T.B."/>
            <person name="Miranda M."/>
            <person name="Frankel A."/>
            <person name="Clarke S."/>
        </authorList>
    </citation>
    <scope>FUNCTION</scope>
</reference>
<reference key="5">
    <citation type="journal article" date="2005" name="J. Biol. Chem.">
        <title>PRMT7, a new protein arginine methyltransferase that synthesizes symmetric dimethylarginine.</title>
        <authorList>
            <person name="Lee J.-H."/>
            <person name="Cook J.R."/>
            <person name="Yang Z.-H."/>
            <person name="Mirochnitchenko O."/>
            <person name="Gunderson S.I."/>
            <person name="Felix A.M."/>
            <person name="Herth N."/>
            <person name="Hoffmann R."/>
            <person name="Pestka S."/>
        </authorList>
    </citation>
    <scope>FUNCTION</scope>
    <scope>SUBCELLULAR LOCATION</scope>
</reference>
<reference key="6">
    <citation type="journal article" date="2007" name="J. Cell Biol.">
        <title>Two distinct arginine methyltransferases are required for biogenesis of Sm-class ribonucleoproteins.</title>
        <authorList>
            <person name="Gonsalvez G.B."/>
            <person name="Tian L."/>
            <person name="Ospina J.K."/>
            <person name="Boisvert F.-M."/>
            <person name="Lamond A.I."/>
            <person name="Matera A.G."/>
        </authorList>
    </citation>
    <scope>FUNCTION</scope>
    <scope>INTERACTION WITH PRMT5 AND SNRPD3</scope>
</reference>
<reference key="7">
    <citation type="journal article" date="2008" name="FEBS Lett.">
        <title>Protein arginine (N)-methyl transferase 7 (PRMT7) as a potential target for the sensitization of tumor cells to camptothecins.</title>
        <authorList>
            <person name="Verbiest V."/>
            <person name="Montaudon D."/>
            <person name="Tautu M.T."/>
            <person name="Moukarzel J."/>
            <person name="Portail J.-P."/>
            <person name="Markovits J."/>
            <person name="Robert J."/>
            <person name="Ichas F."/>
            <person name="Pourquier P."/>
        </authorList>
    </citation>
    <scope>INCREASED SENSITIVITY TO CAMPTOTHECIN</scope>
</reference>
<reference key="8">
    <citation type="journal article" date="2009" name="Hum. Genet.">
        <title>Identification of genomic regions contributing to etoposide-induced cytotoxicity.</title>
        <authorList>
            <person name="Bleibel W.K."/>
            <person name="Duan S."/>
            <person name="Huang R.S."/>
            <person name="Kistner E.O."/>
            <person name="Shukla S.J."/>
            <person name="Wu X."/>
            <person name="Badner J.A."/>
            <person name="Dolan M.E."/>
        </authorList>
    </citation>
    <scope>POSSIBLE INVOLVEMENT IN ETOPOSIDE-INDUCED CYTOTOXICITY</scope>
</reference>
<reference key="9">
    <citation type="journal article" date="2009" name="J. Am. Soc. Mass Spectrom.">
        <title>Accurate localization and relative quantification of arginine methylation using nanoflow liquid chromatography coupled to electron transfer dissociation and orbitrap mass spectrometry.</title>
        <authorList>
            <person name="Wang H."/>
            <person name="Straubinger R.M."/>
            <person name="Aletta J.M."/>
            <person name="Cao J."/>
            <person name="Duan X."/>
            <person name="Yu H."/>
            <person name="Qu J."/>
        </authorList>
    </citation>
    <scope>FUNCTION</scope>
</reference>
<reference key="10">
    <citation type="journal article" date="2012" name="Proc. Natl. Acad. Sci. U.S.A.">
        <title>N-terminal acetylome analyses and functional insights of the N-terminal acetyltransferase NatB.</title>
        <authorList>
            <person name="Van Damme P."/>
            <person name="Lasa M."/>
            <person name="Polevoda B."/>
            <person name="Gazquez C."/>
            <person name="Elosegui-Artola A."/>
            <person name="Kim D.S."/>
            <person name="De Juan-Pardo E."/>
            <person name="Demeyer K."/>
            <person name="Hole K."/>
            <person name="Larrea E."/>
            <person name="Timmerman E."/>
            <person name="Prieto J."/>
            <person name="Arnesen T."/>
            <person name="Sherman F."/>
            <person name="Gevaert K."/>
            <person name="Aldabe R."/>
        </authorList>
    </citation>
    <scope>IDENTIFICATION BY MASS SPECTROMETRY [LARGE SCALE ANALYSIS]</scope>
</reference>
<reference key="11">
    <citation type="journal article" date="2014" name="J. Biol. Chem.">
        <title>Substrate specificity of human protein arginine methyltransferase 7 (PRMT7): the importance of acidic residues in the double E loop.</title>
        <authorList>
            <person name="Feng Y."/>
            <person name="Hadjikyriacou A."/>
            <person name="Clarke S.G."/>
        </authorList>
    </citation>
    <scope>CATALYTIC ACTIVITY</scope>
</reference>
<reference key="12">
    <citation type="journal article" date="2015" name="Nat. Genet.">
        <title>Discovery of four recessive developmental disorders using probabilistic genotype and phenotype matching among 4,125 families.</title>
        <authorList>
            <consortium name="DDD study"/>
            <person name="Akawi N."/>
            <person name="McRae J."/>
            <person name="Ansari M."/>
            <person name="Balasubramanian M."/>
            <person name="Blyth M."/>
            <person name="Brady A.F."/>
            <person name="Clayton S."/>
            <person name="Cole T."/>
            <person name="Deshpande C."/>
            <person name="Fitzgerald T.W."/>
            <person name="Foulds N."/>
            <person name="Francis R."/>
            <person name="Gabriel G."/>
            <person name="Gerety S.S."/>
            <person name="Goodship J."/>
            <person name="Hobson E."/>
            <person name="Jones W.D."/>
            <person name="Joss S."/>
            <person name="King D."/>
            <person name="Klena N."/>
            <person name="Kumar A."/>
            <person name="Lees M."/>
            <person name="Lelliott C."/>
            <person name="Lord J."/>
            <person name="McMullan D."/>
            <person name="O'Regan M."/>
            <person name="Osio D."/>
            <person name="Piombo V."/>
            <person name="Prigmore E."/>
            <person name="Rajan D."/>
            <person name="Rosser E."/>
            <person name="Sifrim A."/>
            <person name="Smith A."/>
            <person name="Swaminathan G.J."/>
            <person name="Turnpenny P."/>
            <person name="Whitworth J."/>
            <person name="Wright C.F."/>
            <person name="Firth H.V."/>
            <person name="Barrett J.C."/>
            <person name="Lo C.W."/>
            <person name="FitzPatrick D.R."/>
            <person name="Hurles M.E."/>
        </authorList>
    </citation>
    <scope>INVOLVEMENT IN SBIDDS</scope>
    <scope>VARIANTS SBIDDS THR-32; GLY-387 AND ARG-494</scope>
</reference>
<protein>
    <recommendedName>
        <fullName>Protein arginine N-methyltransferase 7</fullName>
        <ecNumber evidence="8">2.1.1.321</ecNumber>
    </recommendedName>
    <alternativeName>
        <fullName>Histone-arginine N-methyltransferase PRMT7</fullName>
    </alternativeName>
    <alternativeName>
        <fullName>[Myelin basic protein]-arginine N-methyltransferase PRMT7</fullName>
    </alternativeName>
</protein>
<organism>
    <name type="scientific">Homo sapiens</name>
    <name type="common">Human</name>
    <dbReference type="NCBI Taxonomy" id="9606"/>
    <lineage>
        <taxon>Eukaryota</taxon>
        <taxon>Metazoa</taxon>
        <taxon>Chordata</taxon>
        <taxon>Craniata</taxon>
        <taxon>Vertebrata</taxon>
        <taxon>Euteleostomi</taxon>
        <taxon>Mammalia</taxon>
        <taxon>Eutheria</taxon>
        <taxon>Euarchontoglires</taxon>
        <taxon>Primates</taxon>
        <taxon>Haplorrhini</taxon>
        <taxon>Catarrhini</taxon>
        <taxon>Hominidae</taxon>
        <taxon>Homo</taxon>
    </lineage>
</organism>